<protein>
    <recommendedName>
        <fullName evidence="1">4-hydroxy-tetrahydrodipicolinate reductase</fullName>
        <shortName evidence="1">HTPA reductase</shortName>
        <ecNumber evidence="1">1.17.1.8</ecNumber>
    </recommendedName>
</protein>
<proteinExistence type="inferred from homology"/>
<organism>
    <name type="scientific">Archaeoglobus fulgidus (strain ATCC 49558 / DSM 4304 / JCM 9628 / NBRC 100126 / VC-16)</name>
    <dbReference type="NCBI Taxonomy" id="224325"/>
    <lineage>
        <taxon>Archaea</taxon>
        <taxon>Methanobacteriati</taxon>
        <taxon>Methanobacteriota</taxon>
        <taxon>Archaeoglobi</taxon>
        <taxon>Archaeoglobales</taxon>
        <taxon>Archaeoglobaceae</taxon>
        <taxon>Archaeoglobus</taxon>
    </lineage>
</organism>
<evidence type="ECO:0000255" key="1">
    <source>
        <dbReference type="HAMAP-Rule" id="MF_00102"/>
    </source>
</evidence>
<evidence type="ECO:0000305" key="2"/>
<accession>O29353</accession>
<name>DAPB_ARCFU</name>
<sequence>MRVAVSGAAGRMGRLVVKNAVAEGLKVVQAFDINEVGKDAGELAGVGKIGVPIEDDISKLDADVLIDFTTAEAAMKNAEVAAEKGVRVVMGTTGFTDEDRKRLAELAEKVPMIVSPNFSLGVNIFWKIVEYAAKMLYEWDAEIVELHHRHKRDSPSGTALKLAEIIRKVKEEKGIEADLKTCREGISPRESEIGVFGIRGGDVVGEHTVFFFGSGERIELTHRAMSRECFAIGAVRAAKWIAKVDKPGFYTMDDFLE</sequence>
<dbReference type="EC" id="1.17.1.8" evidence="1"/>
<dbReference type="EMBL" id="AE000782">
    <property type="protein sequence ID" value="AAB90331.1"/>
    <property type="molecule type" value="Genomic_DNA"/>
</dbReference>
<dbReference type="PIR" id="E69363">
    <property type="entry name" value="E69363"/>
</dbReference>
<dbReference type="RefSeq" id="WP_010878409.1">
    <property type="nucleotide sequence ID" value="NC_000917.1"/>
</dbReference>
<dbReference type="SMR" id="O29353"/>
<dbReference type="STRING" id="224325.AF_0909"/>
<dbReference type="PaxDb" id="224325-AF_0909"/>
<dbReference type="EnsemblBacteria" id="AAB90331">
    <property type="protein sequence ID" value="AAB90331"/>
    <property type="gene ID" value="AF_0909"/>
</dbReference>
<dbReference type="GeneID" id="24794507"/>
<dbReference type="KEGG" id="afu:AF_0909"/>
<dbReference type="eggNOG" id="arCOG04393">
    <property type="taxonomic scope" value="Archaea"/>
</dbReference>
<dbReference type="HOGENOM" id="CLU_047479_2_1_2"/>
<dbReference type="OrthoDB" id="195035at2157"/>
<dbReference type="PhylomeDB" id="O29353"/>
<dbReference type="UniPathway" id="UPA00034">
    <property type="reaction ID" value="UER00018"/>
</dbReference>
<dbReference type="Proteomes" id="UP000002199">
    <property type="component" value="Chromosome"/>
</dbReference>
<dbReference type="GO" id="GO:0005737">
    <property type="term" value="C:cytoplasm"/>
    <property type="evidence" value="ECO:0007669"/>
    <property type="project" value="UniProtKB-SubCell"/>
</dbReference>
<dbReference type="GO" id="GO:0008839">
    <property type="term" value="F:4-hydroxy-tetrahydrodipicolinate reductase"/>
    <property type="evidence" value="ECO:0007669"/>
    <property type="project" value="UniProtKB-EC"/>
</dbReference>
<dbReference type="GO" id="GO:0051287">
    <property type="term" value="F:NAD binding"/>
    <property type="evidence" value="ECO:0007669"/>
    <property type="project" value="UniProtKB-UniRule"/>
</dbReference>
<dbReference type="GO" id="GO:0050661">
    <property type="term" value="F:NADP binding"/>
    <property type="evidence" value="ECO:0007669"/>
    <property type="project" value="UniProtKB-UniRule"/>
</dbReference>
<dbReference type="GO" id="GO:0016726">
    <property type="term" value="F:oxidoreductase activity, acting on CH or CH2 groups, NAD or NADP as acceptor"/>
    <property type="evidence" value="ECO:0007669"/>
    <property type="project" value="UniProtKB-UniRule"/>
</dbReference>
<dbReference type="GO" id="GO:0019877">
    <property type="term" value="P:diaminopimelate biosynthetic process"/>
    <property type="evidence" value="ECO:0007669"/>
    <property type="project" value="UniProtKB-UniRule"/>
</dbReference>
<dbReference type="GO" id="GO:0009089">
    <property type="term" value="P:lysine biosynthetic process via diaminopimelate"/>
    <property type="evidence" value="ECO:0007669"/>
    <property type="project" value="UniProtKB-UniRule"/>
</dbReference>
<dbReference type="CDD" id="cd02274">
    <property type="entry name" value="DHDPR_N"/>
    <property type="match status" value="1"/>
</dbReference>
<dbReference type="FunFam" id="3.30.360.10:FF:000009">
    <property type="entry name" value="4-hydroxy-tetrahydrodipicolinate reductase"/>
    <property type="match status" value="1"/>
</dbReference>
<dbReference type="Gene3D" id="3.30.360.10">
    <property type="entry name" value="Dihydrodipicolinate Reductase, domain 2"/>
    <property type="match status" value="1"/>
</dbReference>
<dbReference type="Gene3D" id="3.40.50.720">
    <property type="entry name" value="NAD(P)-binding Rossmann-like Domain"/>
    <property type="match status" value="1"/>
</dbReference>
<dbReference type="HAMAP" id="MF_00102">
    <property type="entry name" value="DapB"/>
    <property type="match status" value="1"/>
</dbReference>
<dbReference type="InterPro" id="IPR022663">
    <property type="entry name" value="DapB_C"/>
</dbReference>
<dbReference type="InterPro" id="IPR000846">
    <property type="entry name" value="DapB_N"/>
</dbReference>
<dbReference type="InterPro" id="IPR022664">
    <property type="entry name" value="DapB_N_CS"/>
</dbReference>
<dbReference type="InterPro" id="IPR023940">
    <property type="entry name" value="DHDPR_bac"/>
</dbReference>
<dbReference type="InterPro" id="IPR036291">
    <property type="entry name" value="NAD(P)-bd_dom_sf"/>
</dbReference>
<dbReference type="NCBIfam" id="TIGR00036">
    <property type="entry name" value="dapB"/>
    <property type="match status" value="1"/>
</dbReference>
<dbReference type="PANTHER" id="PTHR20836:SF0">
    <property type="entry name" value="4-HYDROXY-TETRAHYDRODIPICOLINATE REDUCTASE 1, CHLOROPLASTIC-RELATED"/>
    <property type="match status" value="1"/>
</dbReference>
<dbReference type="PANTHER" id="PTHR20836">
    <property type="entry name" value="DIHYDRODIPICOLINATE REDUCTASE"/>
    <property type="match status" value="1"/>
</dbReference>
<dbReference type="Pfam" id="PF05173">
    <property type="entry name" value="DapB_C"/>
    <property type="match status" value="1"/>
</dbReference>
<dbReference type="Pfam" id="PF01113">
    <property type="entry name" value="DapB_N"/>
    <property type="match status" value="1"/>
</dbReference>
<dbReference type="PIRSF" id="PIRSF000161">
    <property type="entry name" value="DHPR"/>
    <property type="match status" value="1"/>
</dbReference>
<dbReference type="SUPFAM" id="SSF55347">
    <property type="entry name" value="Glyceraldehyde-3-phosphate dehydrogenase-like, C-terminal domain"/>
    <property type="match status" value="1"/>
</dbReference>
<dbReference type="SUPFAM" id="SSF51735">
    <property type="entry name" value="NAD(P)-binding Rossmann-fold domains"/>
    <property type="match status" value="1"/>
</dbReference>
<dbReference type="PROSITE" id="PS01298">
    <property type="entry name" value="DAPB"/>
    <property type="match status" value="1"/>
</dbReference>
<comment type="function">
    <text evidence="1">Catalyzes the conversion of 4-hydroxy-tetrahydrodipicolinate (HTPA) to tetrahydrodipicolinate.</text>
</comment>
<comment type="catalytic activity">
    <reaction evidence="1">
        <text>(S)-2,3,4,5-tetrahydrodipicolinate + NAD(+) + H2O = (2S,4S)-4-hydroxy-2,3,4,5-tetrahydrodipicolinate + NADH + H(+)</text>
        <dbReference type="Rhea" id="RHEA:35323"/>
        <dbReference type="ChEBI" id="CHEBI:15377"/>
        <dbReference type="ChEBI" id="CHEBI:15378"/>
        <dbReference type="ChEBI" id="CHEBI:16845"/>
        <dbReference type="ChEBI" id="CHEBI:57540"/>
        <dbReference type="ChEBI" id="CHEBI:57945"/>
        <dbReference type="ChEBI" id="CHEBI:67139"/>
        <dbReference type="EC" id="1.17.1.8"/>
    </reaction>
</comment>
<comment type="catalytic activity">
    <reaction evidence="1">
        <text>(S)-2,3,4,5-tetrahydrodipicolinate + NADP(+) + H2O = (2S,4S)-4-hydroxy-2,3,4,5-tetrahydrodipicolinate + NADPH + H(+)</text>
        <dbReference type="Rhea" id="RHEA:35331"/>
        <dbReference type="ChEBI" id="CHEBI:15377"/>
        <dbReference type="ChEBI" id="CHEBI:15378"/>
        <dbReference type="ChEBI" id="CHEBI:16845"/>
        <dbReference type="ChEBI" id="CHEBI:57783"/>
        <dbReference type="ChEBI" id="CHEBI:58349"/>
        <dbReference type="ChEBI" id="CHEBI:67139"/>
        <dbReference type="EC" id="1.17.1.8"/>
    </reaction>
</comment>
<comment type="pathway">
    <text evidence="1">Amino-acid biosynthesis; L-lysine biosynthesis via DAP pathway; (S)-tetrahydrodipicolinate from L-aspartate: step 4/4.</text>
</comment>
<comment type="subcellular location">
    <subcellularLocation>
        <location evidence="1">Cytoplasm</location>
    </subcellularLocation>
</comment>
<comment type="similarity">
    <text evidence="1">Belongs to the DapB family.</text>
</comment>
<comment type="caution">
    <text evidence="2">Was originally thought to be a dihydrodipicolinate reductase (DHDPR), catalyzing the conversion of dihydrodipicolinate to tetrahydrodipicolinate. However, it was shown in E.coli that the substrate of the enzymatic reaction is not dihydrodipicolinate (DHDP) but in fact (2S,4S)-4-hydroxy-2,3,4,5-tetrahydrodipicolinic acid (HTPA), the product released by the DapA-catalyzed reaction.</text>
</comment>
<feature type="chain" id="PRO_0000141515" description="4-hydroxy-tetrahydrodipicolinate reductase">
    <location>
        <begin position="1"/>
        <end position="257"/>
    </location>
</feature>
<feature type="active site" description="Proton donor/acceptor" evidence="1">
    <location>
        <position position="147"/>
    </location>
</feature>
<feature type="active site" description="Proton donor" evidence="1">
    <location>
        <position position="151"/>
    </location>
</feature>
<feature type="binding site" evidence="1">
    <location>
        <begin position="7"/>
        <end position="12"/>
    </location>
    <ligand>
        <name>NAD(+)</name>
        <dbReference type="ChEBI" id="CHEBI:57540"/>
    </ligand>
</feature>
<feature type="binding site" evidence="1">
    <location>
        <position position="32"/>
    </location>
    <ligand>
        <name>NAD(+)</name>
        <dbReference type="ChEBI" id="CHEBI:57540"/>
    </ligand>
</feature>
<feature type="binding site" evidence="1">
    <location>
        <begin position="91"/>
        <end position="93"/>
    </location>
    <ligand>
        <name>NAD(+)</name>
        <dbReference type="ChEBI" id="CHEBI:57540"/>
    </ligand>
</feature>
<feature type="binding site" evidence="1">
    <location>
        <begin position="115"/>
        <end position="118"/>
    </location>
    <ligand>
        <name>NAD(+)</name>
        <dbReference type="ChEBI" id="CHEBI:57540"/>
    </ligand>
</feature>
<feature type="binding site" evidence="1">
    <location>
        <position position="148"/>
    </location>
    <ligand>
        <name>(S)-2,3,4,5-tetrahydrodipicolinate</name>
        <dbReference type="ChEBI" id="CHEBI:16845"/>
    </ligand>
</feature>
<feature type="binding site" evidence="1">
    <location>
        <begin position="157"/>
        <end position="158"/>
    </location>
    <ligand>
        <name>(S)-2,3,4,5-tetrahydrodipicolinate</name>
        <dbReference type="ChEBI" id="CHEBI:16845"/>
    </ligand>
</feature>
<gene>
    <name evidence="1" type="primary">dapB</name>
    <name type="ordered locus">AF_0909</name>
</gene>
<keyword id="KW-0028">Amino-acid biosynthesis</keyword>
<keyword id="KW-0963">Cytoplasm</keyword>
<keyword id="KW-0220">Diaminopimelate biosynthesis</keyword>
<keyword id="KW-0457">Lysine biosynthesis</keyword>
<keyword id="KW-0520">NAD</keyword>
<keyword id="KW-0521">NADP</keyword>
<keyword id="KW-0560">Oxidoreductase</keyword>
<keyword id="KW-1185">Reference proteome</keyword>
<reference key="1">
    <citation type="journal article" date="1997" name="Nature">
        <title>The complete genome sequence of the hyperthermophilic, sulphate-reducing archaeon Archaeoglobus fulgidus.</title>
        <authorList>
            <person name="Klenk H.-P."/>
            <person name="Clayton R.A."/>
            <person name="Tomb J.-F."/>
            <person name="White O."/>
            <person name="Nelson K.E."/>
            <person name="Ketchum K.A."/>
            <person name="Dodson R.J."/>
            <person name="Gwinn M.L."/>
            <person name="Hickey E.K."/>
            <person name="Peterson J.D."/>
            <person name="Richardson D.L."/>
            <person name="Kerlavage A.R."/>
            <person name="Graham D.E."/>
            <person name="Kyrpides N.C."/>
            <person name="Fleischmann R.D."/>
            <person name="Quackenbush J."/>
            <person name="Lee N.H."/>
            <person name="Sutton G.G."/>
            <person name="Gill S.R."/>
            <person name="Kirkness E.F."/>
            <person name="Dougherty B.A."/>
            <person name="McKenney K."/>
            <person name="Adams M.D."/>
            <person name="Loftus B.J."/>
            <person name="Peterson S.N."/>
            <person name="Reich C.I."/>
            <person name="McNeil L.K."/>
            <person name="Badger J.H."/>
            <person name="Glodek A."/>
            <person name="Zhou L."/>
            <person name="Overbeek R."/>
            <person name="Gocayne J.D."/>
            <person name="Weidman J.F."/>
            <person name="McDonald L.A."/>
            <person name="Utterback T.R."/>
            <person name="Cotton M.D."/>
            <person name="Spriggs T."/>
            <person name="Artiach P."/>
            <person name="Kaine B.P."/>
            <person name="Sykes S.M."/>
            <person name="Sadow P.W."/>
            <person name="D'Andrea K.P."/>
            <person name="Bowman C."/>
            <person name="Fujii C."/>
            <person name="Garland S.A."/>
            <person name="Mason T.M."/>
            <person name="Olsen G.J."/>
            <person name="Fraser C.M."/>
            <person name="Smith H.O."/>
            <person name="Woese C.R."/>
            <person name="Venter J.C."/>
        </authorList>
    </citation>
    <scope>NUCLEOTIDE SEQUENCE [LARGE SCALE GENOMIC DNA]</scope>
    <source>
        <strain>ATCC 49558 / DSM 4304 / JCM 9628 / NBRC 100126 / VC-16</strain>
    </source>
</reference>